<accession>A6U3S5</accession>
<organism>
    <name type="scientific">Staphylococcus aureus (strain JH1)</name>
    <dbReference type="NCBI Taxonomy" id="359787"/>
    <lineage>
        <taxon>Bacteria</taxon>
        <taxon>Bacillati</taxon>
        <taxon>Bacillota</taxon>
        <taxon>Bacilli</taxon>
        <taxon>Bacillales</taxon>
        <taxon>Staphylococcaceae</taxon>
        <taxon>Staphylococcus</taxon>
    </lineage>
</organism>
<proteinExistence type="inferred from homology"/>
<feature type="chain" id="PRO_1000087784" description="Galactose-6-phosphate isomerase subunit LacA">
    <location>
        <begin position="1"/>
        <end position="142"/>
    </location>
</feature>
<reference key="1">
    <citation type="submission" date="2007-06" db="EMBL/GenBank/DDBJ databases">
        <title>Complete sequence of chromosome of Staphylococcus aureus subsp. aureus JH1.</title>
        <authorList>
            <consortium name="US DOE Joint Genome Institute"/>
            <person name="Copeland A."/>
            <person name="Lucas S."/>
            <person name="Lapidus A."/>
            <person name="Barry K."/>
            <person name="Detter J.C."/>
            <person name="Glavina del Rio T."/>
            <person name="Hammon N."/>
            <person name="Israni S."/>
            <person name="Dalin E."/>
            <person name="Tice H."/>
            <person name="Pitluck S."/>
            <person name="Chain P."/>
            <person name="Malfatti S."/>
            <person name="Shin M."/>
            <person name="Vergez L."/>
            <person name="Schmutz J."/>
            <person name="Larimer F."/>
            <person name="Land M."/>
            <person name="Hauser L."/>
            <person name="Kyrpides N."/>
            <person name="Ivanova N."/>
            <person name="Tomasz A."/>
            <person name="Richardson P."/>
        </authorList>
    </citation>
    <scope>NUCLEOTIDE SEQUENCE [LARGE SCALE GENOMIC DNA]</scope>
    <source>
        <strain>JH1</strain>
    </source>
</reference>
<evidence type="ECO:0000255" key="1">
    <source>
        <dbReference type="HAMAP-Rule" id="MF_01555"/>
    </source>
</evidence>
<name>LACA_STAA2</name>
<protein>
    <recommendedName>
        <fullName evidence="1">Galactose-6-phosphate isomerase subunit LacA</fullName>
        <ecNumber evidence="1">5.3.1.26</ecNumber>
    </recommendedName>
</protein>
<sequence>MAIIIGSDEAGKRLKEVIKSYLLDNKYDVVDVTEGQEVDFVDATLAVAKDVQSQEGNLGIVIDAFGAGSFMVATKIKGMIAAEVSDERSGYMTRGHNNSRMITMGSEIVGDTLAKNVVKGFVEGKYDGGRHQIRVDMLNKMC</sequence>
<gene>
    <name evidence="1" type="primary">lacA</name>
    <name type="ordered locus">SaurJH1_2265</name>
</gene>
<keyword id="KW-0413">Isomerase</keyword>
<keyword id="KW-0423">Lactose metabolism</keyword>
<dbReference type="EC" id="5.3.1.26" evidence="1"/>
<dbReference type="EMBL" id="CP000736">
    <property type="protein sequence ID" value="ABR53093.1"/>
    <property type="molecule type" value="Genomic_DNA"/>
</dbReference>
<dbReference type="SMR" id="A6U3S5"/>
<dbReference type="KEGG" id="sah:SaurJH1_2265"/>
<dbReference type="HOGENOM" id="CLU_091396_4_2_9"/>
<dbReference type="UniPathway" id="UPA00702">
    <property type="reaction ID" value="UER00714"/>
</dbReference>
<dbReference type="GO" id="GO:0050044">
    <property type="term" value="F:galactose-6-phosphate isomerase activity"/>
    <property type="evidence" value="ECO:0007669"/>
    <property type="project" value="UniProtKB-UniRule"/>
</dbReference>
<dbReference type="GO" id="GO:0004751">
    <property type="term" value="F:ribose-5-phosphate isomerase activity"/>
    <property type="evidence" value="ECO:0007669"/>
    <property type="project" value="TreeGrafter"/>
</dbReference>
<dbReference type="GO" id="GO:0019316">
    <property type="term" value="P:D-allose catabolic process"/>
    <property type="evidence" value="ECO:0007669"/>
    <property type="project" value="TreeGrafter"/>
</dbReference>
<dbReference type="GO" id="GO:0019388">
    <property type="term" value="P:galactose catabolic process"/>
    <property type="evidence" value="ECO:0007669"/>
    <property type="project" value="UniProtKB-UniPathway"/>
</dbReference>
<dbReference type="GO" id="GO:0019512">
    <property type="term" value="P:lactose catabolic process via tagatose-6-phosphate"/>
    <property type="evidence" value="ECO:0007669"/>
    <property type="project" value="UniProtKB-UniRule"/>
</dbReference>
<dbReference type="GO" id="GO:0009052">
    <property type="term" value="P:pentose-phosphate shunt, non-oxidative branch"/>
    <property type="evidence" value="ECO:0007669"/>
    <property type="project" value="TreeGrafter"/>
</dbReference>
<dbReference type="Gene3D" id="3.40.1400.10">
    <property type="entry name" value="Sugar-phosphate isomerase, RpiB/LacA/LacB"/>
    <property type="match status" value="1"/>
</dbReference>
<dbReference type="HAMAP" id="MF_01555">
    <property type="entry name" value="LacA"/>
    <property type="match status" value="1"/>
</dbReference>
<dbReference type="InterPro" id="IPR004783">
    <property type="entry name" value="LacA"/>
</dbReference>
<dbReference type="InterPro" id="IPR003500">
    <property type="entry name" value="RpiB_LacA_LacB"/>
</dbReference>
<dbReference type="InterPro" id="IPR036569">
    <property type="entry name" value="RpiB_LacA_LacB_sf"/>
</dbReference>
<dbReference type="NCBIfam" id="TIGR01118">
    <property type="entry name" value="lacA"/>
    <property type="match status" value="1"/>
</dbReference>
<dbReference type="NCBIfam" id="NF006380">
    <property type="entry name" value="PRK08621.1"/>
    <property type="match status" value="1"/>
</dbReference>
<dbReference type="NCBIfam" id="TIGR00689">
    <property type="entry name" value="rpiB_lacA_lacB"/>
    <property type="match status" value="1"/>
</dbReference>
<dbReference type="PANTHER" id="PTHR30345:SF5">
    <property type="entry name" value="GALACTOSE-6-PHOSPHATE ISOMERASE SUBUNIT LACA"/>
    <property type="match status" value="1"/>
</dbReference>
<dbReference type="PANTHER" id="PTHR30345">
    <property type="entry name" value="RIBOSE-5-PHOSPHATE ISOMERASE B"/>
    <property type="match status" value="1"/>
</dbReference>
<dbReference type="Pfam" id="PF02502">
    <property type="entry name" value="LacAB_rpiB"/>
    <property type="match status" value="1"/>
</dbReference>
<dbReference type="PIRSF" id="PIRSF005384">
    <property type="entry name" value="RpiB_LacA_B"/>
    <property type="match status" value="1"/>
</dbReference>
<dbReference type="SUPFAM" id="SSF89623">
    <property type="entry name" value="Ribose/Galactose isomerase RpiB/AlsB"/>
    <property type="match status" value="1"/>
</dbReference>
<comment type="catalytic activity">
    <reaction evidence="1">
        <text>aldehydo-D-galactose 6-phosphate = keto-D-tagatose 6-phosphate</text>
        <dbReference type="Rhea" id="RHEA:13033"/>
        <dbReference type="ChEBI" id="CHEBI:58255"/>
        <dbReference type="ChEBI" id="CHEBI:134283"/>
        <dbReference type="EC" id="5.3.1.26"/>
    </reaction>
</comment>
<comment type="pathway">
    <text evidence="1">Carbohydrate metabolism; D-galactose 6-phosphate degradation; D-tagatose 6-phosphate from D-galactose 6-phosphate: step 1/1.</text>
</comment>
<comment type="subunit">
    <text evidence="1">Heteromultimeric protein consisting of LacA and LacB.</text>
</comment>
<comment type="similarity">
    <text evidence="1">Belongs to the LacAB/RpiB family.</text>
</comment>